<reference key="1">
    <citation type="journal article" date="2007" name="J. Bacteriol.">
        <title>Genome sequence and analysis of the soil cellulolytic actinomycete Thermobifida fusca YX.</title>
        <authorList>
            <person name="Lykidis A."/>
            <person name="Mavromatis K."/>
            <person name="Ivanova N."/>
            <person name="Anderson I."/>
            <person name="Land M."/>
            <person name="DiBartolo G."/>
            <person name="Martinez M."/>
            <person name="Lapidus A."/>
            <person name="Lucas S."/>
            <person name="Copeland A."/>
            <person name="Richardson P."/>
            <person name="Wilson D.B."/>
            <person name="Kyrpides N."/>
        </authorList>
    </citation>
    <scope>NUCLEOTIDE SEQUENCE [LARGE SCALE GENOMIC DNA]</scope>
    <source>
        <strain>YX</strain>
    </source>
</reference>
<evidence type="ECO:0000255" key="1">
    <source>
        <dbReference type="HAMAP-Rule" id="MF_01297"/>
    </source>
</evidence>
<evidence type="ECO:0000305" key="2"/>
<name>NBLIK_THEFY</name>
<accession>Q47KW7</accession>
<dbReference type="EMBL" id="CP000088">
    <property type="protein sequence ID" value="AAZ56905.1"/>
    <property type="molecule type" value="Genomic_DNA"/>
</dbReference>
<dbReference type="RefSeq" id="WP_011293295.1">
    <property type="nucleotide sequence ID" value="NC_007333.1"/>
</dbReference>
<dbReference type="SMR" id="Q47KW7"/>
<dbReference type="STRING" id="269800.Tfu_2872"/>
<dbReference type="KEGG" id="tfu:Tfu_2872"/>
<dbReference type="eggNOG" id="COG3485">
    <property type="taxonomic scope" value="Bacteria"/>
</dbReference>
<dbReference type="HOGENOM" id="CLU_085483_0_1_11"/>
<dbReference type="OrthoDB" id="4804006at2"/>
<dbReference type="CDD" id="cd07828">
    <property type="entry name" value="lipocalin_heme-bd-THAP4-like"/>
    <property type="match status" value="1"/>
</dbReference>
<dbReference type="Gene3D" id="2.40.128.20">
    <property type="match status" value="1"/>
</dbReference>
<dbReference type="HAMAP" id="MF_01297">
    <property type="entry name" value="nitrobindin"/>
    <property type="match status" value="1"/>
</dbReference>
<dbReference type="InterPro" id="IPR012674">
    <property type="entry name" value="Calycin"/>
</dbReference>
<dbReference type="InterPro" id="IPR022939">
    <property type="entry name" value="Nb(III)_bact/plant"/>
</dbReference>
<dbReference type="InterPro" id="IPR045165">
    <property type="entry name" value="Nitrobindin"/>
</dbReference>
<dbReference type="InterPro" id="IPR014878">
    <property type="entry name" value="THAP4-like_heme-bd"/>
</dbReference>
<dbReference type="PANTHER" id="PTHR15854:SF4">
    <property type="entry name" value="PEROXYNITRITE ISOMERASE THAP4"/>
    <property type="match status" value="1"/>
</dbReference>
<dbReference type="PANTHER" id="PTHR15854">
    <property type="entry name" value="THAP4 PROTEIN"/>
    <property type="match status" value="1"/>
</dbReference>
<dbReference type="Pfam" id="PF08768">
    <property type="entry name" value="THAP4_heme-bd"/>
    <property type="match status" value="1"/>
</dbReference>
<dbReference type="SUPFAM" id="SSF50814">
    <property type="entry name" value="Lipocalins"/>
    <property type="match status" value="1"/>
</dbReference>
<proteinExistence type="inferred from homology"/>
<protein>
    <recommendedName>
        <fullName evidence="2">Ferric nitrobindin-like protein</fullName>
    </recommendedName>
</protein>
<gene>
    <name type="ordered locus">Tfu_2872</name>
</gene>
<comment type="similarity">
    <text evidence="1">Belongs to the nitrobindin family.</text>
</comment>
<comment type="caution">
    <text evidence="2">Lacks the conserved His residue that binds heme iron in the nitrobindin family.</text>
</comment>
<feature type="chain" id="PRO_0000356956" description="Ferric nitrobindin-like protein">
    <location>
        <begin position="1"/>
        <end position="179"/>
    </location>
</feature>
<feature type="short sequence motif" description="GXWXGXG" evidence="1">
    <location>
        <begin position="17"/>
        <end position="23"/>
    </location>
</feature>
<organism>
    <name type="scientific">Thermobifida fusca (strain YX)</name>
    <dbReference type="NCBI Taxonomy" id="269800"/>
    <lineage>
        <taxon>Bacteria</taxon>
        <taxon>Bacillati</taxon>
        <taxon>Actinomycetota</taxon>
        <taxon>Actinomycetes</taxon>
        <taxon>Streptosporangiales</taxon>
        <taxon>Nocardiopsidaceae</taxon>
        <taxon>Thermobifida</taxon>
    </lineage>
</organism>
<sequence>MQSEMHPELAKLSFLLGRWEGLGVAGYPDTEEFQFTQVIEFTHDGHPHLNYRSQVWRVNEDGSRGEPVTSESGYWRVRTGKAAQQEDPDQPPIHVEVLISHPEGYSEVYLGTVFAHRVELHTDVVVRTETGLPAAASHRLYGLFGDNRETLGYAWDLAANSKELQPYMSAQLQRVDRKS</sequence>